<proteinExistence type="evidence at transcript level"/>
<gene>
    <name type="primary">RAF1</name>
    <name type="synonym">MIL</name>
</gene>
<keyword id="KW-0025">Alternative splicing</keyword>
<keyword id="KW-0067">ATP-binding</keyword>
<keyword id="KW-1003">Cell membrane</keyword>
<keyword id="KW-0963">Cytoplasm</keyword>
<keyword id="KW-0418">Kinase</keyword>
<keyword id="KW-0472">Membrane</keyword>
<keyword id="KW-0479">Metal-binding</keyword>
<keyword id="KW-0547">Nucleotide-binding</keyword>
<keyword id="KW-0597">Phosphoprotein</keyword>
<keyword id="KW-0656">Proto-oncogene</keyword>
<keyword id="KW-1185">Reference proteome</keyword>
<keyword id="KW-0723">Serine/threonine-protein kinase</keyword>
<keyword id="KW-0808">Transferase</keyword>
<keyword id="KW-0862">Zinc</keyword>
<keyword id="KW-0863">Zinc-finger</keyword>
<evidence type="ECO:0000250" key="1"/>
<evidence type="ECO:0000250" key="2">
    <source>
        <dbReference type="UniProtKB" id="P04049"/>
    </source>
</evidence>
<evidence type="ECO:0000255" key="3">
    <source>
        <dbReference type="PROSITE-ProRule" id="PRU00159"/>
    </source>
</evidence>
<evidence type="ECO:0000255" key="4">
    <source>
        <dbReference type="PROSITE-ProRule" id="PRU00226"/>
    </source>
</evidence>
<evidence type="ECO:0000255" key="5">
    <source>
        <dbReference type="PROSITE-ProRule" id="PRU00262"/>
    </source>
</evidence>
<evidence type="ECO:0000255" key="6">
    <source>
        <dbReference type="PROSITE-ProRule" id="PRU10027"/>
    </source>
</evidence>
<evidence type="ECO:0000256" key="7">
    <source>
        <dbReference type="SAM" id="MobiDB-lite"/>
    </source>
</evidence>
<evidence type="ECO:0000269" key="8">
    <source>
    </source>
</evidence>
<evidence type="ECO:0000303" key="9">
    <source>
    </source>
</evidence>
<evidence type="ECO:0000305" key="10"/>
<comment type="function">
    <text evidence="2">Serine/threonine-protein kinase that acts as a regulatory link between the membrane-associated Ras GTPases and the MAPK/ERK cascade, and this critical regulatory link functions as a switch determining cell fate decisions. RAF1 activation initiates a mitogen-activated protein kinase (MAPK) cascade that comprises a sequential phosphorylation of the dual-specific MAPK kinases (MAP2K1/MEK1 and MAP2K2/MEK2) and the extracellular signal-regulated kinases (MAPK3/ERK1 and MAPK1/ERK2) (By similarity).</text>
</comment>
<comment type="catalytic activity">
    <reaction evidence="2">
        <text>L-seryl-[protein] + ATP = O-phospho-L-seryl-[protein] + ADP + H(+)</text>
        <dbReference type="Rhea" id="RHEA:17989"/>
        <dbReference type="Rhea" id="RHEA-COMP:9863"/>
        <dbReference type="Rhea" id="RHEA-COMP:11604"/>
        <dbReference type="ChEBI" id="CHEBI:15378"/>
        <dbReference type="ChEBI" id="CHEBI:29999"/>
        <dbReference type="ChEBI" id="CHEBI:30616"/>
        <dbReference type="ChEBI" id="CHEBI:83421"/>
        <dbReference type="ChEBI" id="CHEBI:456216"/>
        <dbReference type="EC" id="2.7.11.1"/>
    </reaction>
    <physiologicalReaction direction="left-to-right" evidence="2">
        <dbReference type="Rhea" id="RHEA:17990"/>
    </physiologicalReaction>
</comment>
<comment type="catalytic activity">
    <reaction evidence="2">
        <text>L-threonyl-[protein] + ATP = O-phospho-L-threonyl-[protein] + ADP + H(+)</text>
        <dbReference type="Rhea" id="RHEA:46608"/>
        <dbReference type="Rhea" id="RHEA-COMP:11060"/>
        <dbReference type="Rhea" id="RHEA-COMP:11605"/>
        <dbReference type="ChEBI" id="CHEBI:15378"/>
        <dbReference type="ChEBI" id="CHEBI:30013"/>
        <dbReference type="ChEBI" id="CHEBI:30616"/>
        <dbReference type="ChEBI" id="CHEBI:61977"/>
        <dbReference type="ChEBI" id="CHEBI:456216"/>
        <dbReference type="EC" id="2.7.11.1"/>
    </reaction>
    <physiologicalReaction direction="left-to-right" evidence="2">
        <dbReference type="Rhea" id="RHEA:46609"/>
    </physiologicalReaction>
</comment>
<comment type="subcellular location">
    <subcellularLocation>
        <location evidence="1">Cytoplasm</location>
    </subcellularLocation>
    <subcellularLocation>
        <location evidence="1">Cell membrane</location>
    </subcellularLocation>
</comment>
<comment type="alternative products">
    <event type="alternative splicing"/>
    <isoform>
        <id>P05625-1</id>
        <name>1</name>
        <name>6C</name>
        <sequence type="displayed"/>
    </isoform>
    <isoform>
        <id>P05625-2</id>
        <name>2</name>
        <name>1A</name>
        <sequence type="described" ref="VSP_034628"/>
    </isoform>
</comment>
<comment type="tissue specificity">
    <text evidence="8">Isoform 1 was present in all tissues tested: skeletal muscle, intestine, brain, gizzard, heart, lung, kidney, bone marrow, spleen and bursa of Fabricius. Isoform 2 was only detected in brain, heart and skeletal muscle. In brain and heart isoform 1 is more abundant than isoform 2. In skeletal muscle isoform 2 is more abundant than isoform 1.</text>
</comment>
<comment type="PTM">
    <text evidence="1">Phosphorylation at Ser-259 inactivates kinase activity. Dephosphorylation of Ser-259 by a complex containing protein phosphatase 1 relieves inactivation, leading to stimulate RAF1 activity (By similarity).</text>
</comment>
<comment type="similarity">
    <text evidence="10">Belongs to the protein kinase superfamily. TKL Ser/Thr protein kinase family. RAF subfamily.</text>
</comment>
<accession>P05625</accession>
<accession>Q90893</accession>
<accession>Q90894</accession>
<protein>
    <recommendedName>
        <fullName>RAF proto-oncogene serine/threonine-protein kinase</fullName>
        <ecNumber>2.7.11.1</ecNumber>
    </recommendedName>
    <alternativeName>
        <fullName>C-MIL</fullName>
    </alternativeName>
    <alternativeName>
        <fullName>C-RAF</fullName>
    </alternativeName>
    <alternativeName>
        <fullName>MIL proto-oncogene serine/threonine-protein kinase</fullName>
    </alternativeName>
    <alternativeName>
        <fullName>RAF-1</fullName>
    </alternativeName>
</protein>
<sequence length="647" mass="73125">MEHIQGAWKTISNGFGLKDSVFDGPNCISPTIVQQFGYQRRASDDGKISDTSKTSNTIRVFLPNKQRTVVNVRNGMTLHDCLMKALKVRGLQPECCAVFRLVTEPKGKKVRLDWNTDAASLIGEELQVDFLDHVPLTTHNFARKTFLKLAFCDICQKFLLNGFRCQTCGYKFHEHCSTKVPTMCVDWSNIRQLLLFPNSNISDSGVPALPPLTMRRMRESVSRIPVSSQHRYSTPHVFTFNTSNPSSEGTLSQRQRSTSTPNVHMVSTTMPVDSRIIEDAIRNHSESASPSALSGSPNNMSPTGWSQPKTPVPAQRERAPGTNTQEKNKIRPRGQRDSSYYWEIEASEVMLSTRIGSGSFGTVYKGKWHGDVAVKILKVVDPTPEQFQAFRNEVAVLRKTRHVNILLFMGYMTKDNLAIVTQWCEGSSLYKHLHVQETKFQMFQLIDIARQTAQGMDYLHAKNIIHRDMKSNNIFLHEGLTVKIGDFGLATVKSRWSGSQQVEQPTGSILWMAPEVIRMQDSNPFSFQSDVYSYGIVLYELMTGELPYSHINNRDQIIFMVGRGYASPDLSKLYKNCPKAMKRLVADCLKKVREERPLFPQILSSIELLQHSLPKINRSASEPSLHRASHTEDINSCTLTSTRLPVF</sequence>
<organism>
    <name type="scientific">Gallus gallus</name>
    <name type="common">Chicken</name>
    <dbReference type="NCBI Taxonomy" id="9031"/>
    <lineage>
        <taxon>Eukaryota</taxon>
        <taxon>Metazoa</taxon>
        <taxon>Chordata</taxon>
        <taxon>Craniata</taxon>
        <taxon>Vertebrata</taxon>
        <taxon>Euteleostomi</taxon>
        <taxon>Archelosauria</taxon>
        <taxon>Archosauria</taxon>
        <taxon>Dinosauria</taxon>
        <taxon>Saurischia</taxon>
        <taxon>Theropoda</taxon>
        <taxon>Coelurosauria</taxon>
        <taxon>Aves</taxon>
        <taxon>Neognathae</taxon>
        <taxon>Galloanserae</taxon>
        <taxon>Galliformes</taxon>
        <taxon>Phasianidae</taxon>
        <taxon>Phasianinae</taxon>
        <taxon>Gallus</taxon>
    </lineage>
</organism>
<name>RAF1_CHICK</name>
<dbReference type="EC" id="2.7.11.1"/>
<dbReference type="EMBL" id="X07017">
    <property type="protein sequence ID" value="CAA30069.1"/>
    <property type="molecule type" value="mRNA"/>
</dbReference>
<dbReference type="EMBL" id="K03269">
    <property type="protein sequence ID" value="AAA48952.1"/>
    <property type="molecule type" value="Genomic_DNA"/>
</dbReference>
<dbReference type="EMBL" id="K03259">
    <property type="protein sequence ID" value="AAA48952.1"/>
    <property type="status" value="JOINED"/>
    <property type="molecule type" value="Genomic_DNA"/>
</dbReference>
<dbReference type="EMBL" id="K03260">
    <property type="protein sequence ID" value="AAA48952.1"/>
    <property type="status" value="JOINED"/>
    <property type="molecule type" value="Genomic_DNA"/>
</dbReference>
<dbReference type="EMBL" id="K03261">
    <property type="protein sequence ID" value="AAA48952.1"/>
    <property type="status" value="JOINED"/>
    <property type="molecule type" value="Genomic_DNA"/>
</dbReference>
<dbReference type="EMBL" id="K03262">
    <property type="protein sequence ID" value="AAA48952.1"/>
    <property type="status" value="JOINED"/>
    <property type="molecule type" value="Genomic_DNA"/>
</dbReference>
<dbReference type="EMBL" id="K03263">
    <property type="protein sequence ID" value="AAA48952.1"/>
    <property type="status" value="JOINED"/>
    <property type="molecule type" value="Genomic_DNA"/>
</dbReference>
<dbReference type="EMBL" id="K03264">
    <property type="protein sequence ID" value="AAA48952.1"/>
    <property type="status" value="JOINED"/>
    <property type="molecule type" value="Genomic_DNA"/>
</dbReference>
<dbReference type="EMBL" id="K03265">
    <property type="protein sequence ID" value="AAA48952.1"/>
    <property type="status" value="JOINED"/>
    <property type="molecule type" value="Genomic_DNA"/>
</dbReference>
<dbReference type="EMBL" id="K03266">
    <property type="protein sequence ID" value="AAA48952.1"/>
    <property type="status" value="JOINED"/>
    <property type="molecule type" value="Genomic_DNA"/>
</dbReference>
<dbReference type="EMBL" id="K03267">
    <property type="protein sequence ID" value="AAA48952.1"/>
    <property type="status" value="JOINED"/>
    <property type="molecule type" value="Genomic_DNA"/>
</dbReference>
<dbReference type="EMBL" id="K03268">
    <property type="protein sequence ID" value="AAA48952.1"/>
    <property type="status" value="JOINED"/>
    <property type="molecule type" value="Genomic_DNA"/>
</dbReference>
<dbReference type="EMBL" id="K03048">
    <property type="protein sequence ID" value="AAA48951.1"/>
    <property type="molecule type" value="Genomic_DNA"/>
</dbReference>
<dbReference type="EMBL" id="K03047">
    <property type="protein sequence ID" value="AAA48951.1"/>
    <property type="status" value="JOINED"/>
    <property type="molecule type" value="Genomic_DNA"/>
</dbReference>
<dbReference type="EMBL" id="M19461">
    <property type="protein sequence ID" value="AAA48953.1"/>
    <property type="molecule type" value="mRNA"/>
</dbReference>
<dbReference type="EMBL" id="X55430">
    <property type="status" value="NOT_ANNOTATED_CDS"/>
    <property type="molecule type" value="Genomic_DNA"/>
</dbReference>
<dbReference type="PIR" id="I50382">
    <property type="entry name" value="I50382"/>
</dbReference>
<dbReference type="PIR" id="S00644">
    <property type="entry name" value="S00644"/>
</dbReference>
<dbReference type="RefSeq" id="NP_990638.1">
    <molecule id="P05625-1"/>
    <property type="nucleotide sequence ID" value="NM_205307.2"/>
</dbReference>
<dbReference type="RefSeq" id="XP_015148495.1">
    <molecule id="P05625-2"/>
    <property type="nucleotide sequence ID" value="XM_015293009.4"/>
</dbReference>
<dbReference type="RefSeq" id="XP_015148496.1">
    <molecule id="P05625-2"/>
    <property type="nucleotide sequence ID" value="XM_015293010.4"/>
</dbReference>
<dbReference type="RefSeq" id="XP_015148497.1">
    <molecule id="P05625-2"/>
    <property type="nucleotide sequence ID" value="XM_015293011.4"/>
</dbReference>
<dbReference type="RefSeq" id="XP_015148498.1">
    <molecule id="P05625-2"/>
    <property type="nucleotide sequence ID" value="XM_015293012.4"/>
</dbReference>
<dbReference type="RefSeq" id="XP_015148499.1">
    <molecule id="P05625-1"/>
    <property type="nucleotide sequence ID" value="XM_015293013.4"/>
</dbReference>
<dbReference type="RefSeq" id="XP_025010214.1">
    <molecule id="P05625-1"/>
    <property type="nucleotide sequence ID" value="XM_025154446.3"/>
</dbReference>
<dbReference type="RefSeq" id="XP_040502065.1">
    <molecule id="P05625-2"/>
    <property type="nucleotide sequence ID" value="XM_040646131.2"/>
</dbReference>
<dbReference type="RefSeq" id="XP_040502066.1">
    <molecule id="P05625-1"/>
    <property type="nucleotide sequence ID" value="XM_040646132.2"/>
</dbReference>
<dbReference type="RefSeq" id="XP_040502067.1">
    <molecule id="P05625-1"/>
    <property type="nucleotide sequence ID" value="XM_040646133.2"/>
</dbReference>
<dbReference type="RefSeq" id="XP_046755784.1">
    <molecule id="P05625-2"/>
    <property type="nucleotide sequence ID" value="XM_046899828.1"/>
</dbReference>
<dbReference type="RefSeq" id="XP_046755785.1">
    <molecule id="P05625-2"/>
    <property type="nucleotide sequence ID" value="XM_046899829.1"/>
</dbReference>
<dbReference type="RefSeq" id="XP_046755786.1">
    <molecule id="P05625-2"/>
    <property type="nucleotide sequence ID" value="XM_046899830.1"/>
</dbReference>
<dbReference type="RefSeq" id="XP_046755787.1">
    <molecule id="P05625-2"/>
    <property type="nucleotide sequence ID" value="XM_046899831.1"/>
</dbReference>
<dbReference type="RefSeq" id="XP_046782072.1">
    <molecule id="P05625-2"/>
    <property type="nucleotide sequence ID" value="XM_046926116.1"/>
</dbReference>
<dbReference type="RefSeq" id="XP_046782073.1">
    <molecule id="P05625-2"/>
    <property type="nucleotide sequence ID" value="XM_046926117.1"/>
</dbReference>
<dbReference type="RefSeq" id="XP_046782074.1">
    <molecule id="P05625-2"/>
    <property type="nucleotide sequence ID" value="XM_046926118.1"/>
</dbReference>
<dbReference type="RefSeq" id="XP_046782075.1">
    <molecule id="P05625-2"/>
    <property type="nucleotide sequence ID" value="XM_046926119.1"/>
</dbReference>
<dbReference type="RefSeq" id="XP_046782076.1">
    <molecule id="P05625-2"/>
    <property type="nucleotide sequence ID" value="XM_046926120.1"/>
</dbReference>
<dbReference type="RefSeq" id="XP_046782077.1">
    <molecule id="P05625-2"/>
    <property type="nucleotide sequence ID" value="XM_046926121.1"/>
</dbReference>
<dbReference type="RefSeq" id="XP_046782078.1">
    <molecule id="P05625-2"/>
    <property type="nucleotide sequence ID" value="XM_046926122.1"/>
</dbReference>
<dbReference type="RefSeq" id="XP_046782079.1">
    <molecule id="P05625-2"/>
    <property type="nucleotide sequence ID" value="XM_046926123.1"/>
</dbReference>
<dbReference type="RefSeq" id="XP_046782080.1">
    <molecule id="P05625-1"/>
    <property type="nucleotide sequence ID" value="XM_046926124.1"/>
</dbReference>
<dbReference type="RefSeq" id="XP_046782081.1">
    <molecule id="P05625-1"/>
    <property type="nucleotide sequence ID" value="XM_046926125.1"/>
</dbReference>
<dbReference type="RefSeq" id="XP_046782082.1">
    <molecule id="P05625-1"/>
    <property type="nucleotide sequence ID" value="XM_046926126.1"/>
</dbReference>
<dbReference type="RefSeq" id="XP_046782083.1">
    <molecule id="P05625-1"/>
    <property type="nucleotide sequence ID" value="XM_046926127.1"/>
</dbReference>
<dbReference type="SMR" id="P05625"/>
<dbReference type="BioGRID" id="676505">
    <property type="interactions" value="1"/>
</dbReference>
<dbReference type="FunCoup" id="P05625">
    <property type="interactions" value="2288"/>
</dbReference>
<dbReference type="STRING" id="9031.ENSGALP00000046736"/>
<dbReference type="GlyGen" id="P05625">
    <property type="glycosylation" value="1 site"/>
</dbReference>
<dbReference type="iPTMnet" id="P05625"/>
<dbReference type="PaxDb" id="9031-ENSGALP00000033314"/>
<dbReference type="Ensembl" id="ENSGALT00010067700.1">
    <molecule id="P05625-2"/>
    <property type="protein sequence ID" value="ENSGALP00010041443.1"/>
    <property type="gene ID" value="ENSGALG00010027930.1"/>
</dbReference>
<dbReference type="Ensembl" id="ENSGALT00010067703.1">
    <molecule id="P05625-1"/>
    <property type="protein sequence ID" value="ENSGALP00010041446.1"/>
    <property type="gene ID" value="ENSGALG00010027930.1"/>
</dbReference>
<dbReference type="GeneID" id="396245"/>
<dbReference type="KEGG" id="gga:396245"/>
<dbReference type="CTD" id="5894"/>
<dbReference type="VEuPathDB" id="HostDB:geneid_396245"/>
<dbReference type="eggNOG" id="KOG0193">
    <property type="taxonomic scope" value="Eukaryota"/>
</dbReference>
<dbReference type="GeneTree" id="ENSGT00940000156084"/>
<dbReference type="HOGENOM" id="CLU_023684_1_1_1"/>
<dbReference type="InParanoid" id="P05625"/>
<dbReference type="OMA" id="SAYKRHA"/>
<dbReference type="OrthoDB" id="774951at2759"/>
<dbReference type="PhylomeDB" id="P05625"/>
<dbReference type="TreeFam" id="TF317006"/>
<dbReference type="BRENDA" id="2.7.11.1">
    <property type="organism ID" value="1306"/>
</dbReference>
<dbReference type="Reactome" id="R-GGA-2672351">
    <property type="pathway name" value="Stimuli-sensing channels"/>
</dbReference>
<dbReference type="Reactome" id="R-GGA-392517">
    <property type="pathway name" value="Rap1 signalling"/>
</dbReference>
<dbReference type="Reactome" id="R-GGA-430116">
    <property type="pathway name" value="GP1b-IX-V activation signalling"/>
</dbReference>
<dbReference type="Reactome" id="R-GGA-5621575">
    <property type="pathway name" value="CD209 (DC-SIGN) signaling"/>
</dbReference>
<dbReference type="Reactome" id="R-GGA-5673000">
    <property type="pathway name" value="RAF activation"/>
</dbReference>
<dbReference type="Reactome" id="R-GGA-5674135">
    <property type="pathway name" value="MAP2K and MAPK activation"/>
</dbReference>
<dbReference type="Reactome" id="R-GGA-5674499">
    <property type="pathway name" value="Negative feedback regulation of MAPK pathway"/>
</dbReference>
<dbReference type="Reactome" id="R-GGA-5675221">
    <property type="pathway name" value="Negative regulation of MAPK pathway"/>
</dbReference>
<dbReference type="Reactome" id="R-GGA-9732724">
    <property type="pathway name" value="IFNG signaling activates MAPKs"/>
</dbReference>
<dbReference type="PRO" id="PR:P05625"/>
<dbReference type="Proteomes" id="UP000000539">
    <property type="component" value="Chromosome 12"/>
</dbReference>
<dbReference type="Bgee" id="ENSGALG00000004998">
    <property type="expression patterns" value="Expressed in skeletal muscle tissue and 12 other cell types or tissues"/>
</dbReference>
<dbReference type="GO" id="GO:0005737">
    <property type="term" value="C:cytoplasm"/>
    <property type="evidence" value="ECO:0000250"/>
    <property type="project" value="UniProtKB"/>
</dbReference>
<dbReference type="GO" id="GO:0005829">
    <property type="term" value="C:cytosol"/>
    <property type="evidence" value="ECO:0000318"/>
    <property type="project" value="GO_Central"/>
</dbReference>
<dbReference type="GO" id="GO:0005794">
    <property type="term" value="C:Golgi apparatus"/>
    <property type="evidence" value="ECO:0007669"/>
    <property type="project" value="Ensembl"/>
</dbReference>
<dbReference type="GO" id="GO:0005739">
    <property type="term" value="C:mitochondrion"/>
    <property type="evidence" value="ECO:0000318"/>
    <property type="project" value="GO_Central"/>
</dbReference>
<dbReference type="GO" id="GO:0005886">
    <property type="term" value="C:plasma membrane"/>
    <property type="evidence" value="ECO:0000250"/>
    <property type="project" value="UniProtKB"/>
</dbReference>
<dbReference type="GO" id="GO:0031143">
    <property type="term" value="C:pseudopodium"/>
    <property type="evidence" value="ECO:0007669"/>
    <property type="project" value="Ensembl"/>
</dbReference>
<dbReference type="GO" id="GO:0010856">
    <property type="term" value="F:adenylate cyclase activator activity"/>
    <property type="evidence" value="ECO:0007669"/>
    <property type="project" value="Ensembl"/>
</dbReference>
<dbReference type="GO" id="GO:0005524">
    <property type="term" value="F:ATP binding"/>
    <property type="evidence" value="ECO:0007669"/>
    <property type="project" value="UniProtKB-KW"/>
</dbReference>
<dbReference type="GO" id="GO:0042802">
    <property type="term" value="F:identical protein binding"/>
    <property type="evidence" value="ECO:0007669"/>
    <property type="project" value="Ensembl"/>
</dbReference>
<dbReference type="GO" id="GO:0004709">
    <property type="term" value="F:MAP kinase kinase kinase activity"/>
    <property type="evidence" value="ECO:0000318"/>
    <property type="project" value="GO_Central"/>
</dbReference>
<dbReference type="GO" id="GO:0106310">
    <property type="term" value="F:protein serine kinase activity"/>
    <property type="evidence" value="ECO:0007669"/>
    <property type="project" value="RHEA"/>
</dbReference>
<dbReference type="GO" id="GO:0031267">
    <property type="term" value="F:small GTPase binding"/>
    <property type="evidence" value="ECO:0007669"/>
    <property type="project" value="Ensembl"/>
</dbReference>
<dbReference type="GO" id="GO:0008270">
    <property type="term" value="F:zinc ion binding"/>
    <property type="evidence" value="ECO:0007669"/>
    <property type="project" value="UniProtKB-KW"/>
</dbReference>
<dbReference type="GO" id="GO:0071550">
    <property type="term" value="P:death-inducing signaling complex assembly"/>
    <property type="evidence" value="ECO:0007669"/>
    <property type="project" value="Ensembl"/>
</dbReference>
<dbReference type="GO" id="GO:0038133">
    <property type="term" value="P:ERBB2-ERBB3 signaling pathway"/>
    <property type="evidence" value="ECO:0007669"/>
    <property type="project" value="Ensembl"/>
</dbReference>
<dbReference type="GO" id="GO:0008625">
    <property type="term" value="P:extrinsic apoptotic signaling pathway via death domain receptors"/>
    <property type="evidence" value="ECO:0007669"/>
    <property type="project" value="Ensembl"/>
</dbReference>
<dbReference type="GO" id="GO:0060324">
    <property type="term" value="P:face development"/>
    <property type="evidence" value="ECO:0007669"/>
    <property type="project" value="Ensembl"/>
</dbReference>
<dbReference type="GO" id="GO:0008286">
    <property type="term" value="P:insulin receptor signaling pathway"/>
    <property type="evidence" value="ECO:0007669"/>
    <property type="project" value="Ensembl"/>
</dbReference>
<dbReference type="GO" id="GO:0035773">
    <property type="term" value="P:insulin secretion involved in cellular response to glucose stimulus"/>
    <property type="evidence" value="ECO:0007669"/>
    <property type="project" value="Ensembl"/>
</dbReference>
<dbReference type="GO" id="GO:0048009">
    <property type="term" value="P:insulin-like growth factor receptor signaling pathway"/>
    <property type="evidence" value="ECO:0007669"/>
    <property type="project" value="Ensembl"/>
</dbReference>
<dbReference type="GO" id="GO:0045104">
    <property type="term" value="P:intermediate filament cytoskeleton organization"/>
    <property type="evidence" value="ECO:0007669"/>
    <property type="project" value="Ensembl"/>
</dbReference>
<dbReference type="GO" id="GO:0000165">
    <property type="term" value="P:MAPK cascade"/>
    <property type="evidence" value="ECO:0000318"/>
    <property type="project" value="GO_Central"/>
</dbReference>
<dbReference type="GO" id="GO:0042552">
    <property type="term" value="P:myelination"/>
    <property type="evidence" value="ECO:0007669"/>
    <property type="project" value="Ensembl"/>
</dbReference>
<dbReference type="GO" id="GO:0008285">
    <property type="term" value="P:negative regulation of cell population proliferation"/>
    <property type="evidence" value="ECO:0007669"/>
    <property type="project" value="Ensembl"/>
</dbReference>
<dbReference type="GO" id="GO:1902042">
    <property type="term" value="P:negative regulation of extrinsic apoptotic signaling pathway via death domain receptors"/>
    <property type="evidence" value="ECO:0007669"/>
    <property type="project" value="Ensembl"/>
</dbReference>
<dbReference type="GO" id="GO:0031333">
    <property type="term" value="P:negative regulation of protein-containing complex assembly"/>
    <property type="evidence" value="ECO:0007669"/>
    <property type="project" value="Ensembl"/>
</dbReference>
<dbReference type="GO" id="GO:0048011">
    <property type="term" value="P:neurotrophin TRK receptor signaling pathway"/>
    <property type="evidence" value="ECO:0007669"/>
    <property type="project" value="Ensembl"/>
</dbReference>
<dbReference type="GO" id="GO:0043410">
    <property type="term" value="P:positive regulation of MAPK cascade"/>
    <property type="evidence" value="ECO:0007669"/>
    <property type="project" value="Ensembl"/>
</dbReference>
<dbReference type="GO" id="GO:0045944">
    <property type="term" value="P:positive regulation of transcription by RNA polymerase II"/>
    <property type="evidence" value="ECO:0007669"/>
    <property type="project" value="Ensembl"/>
</dbReference>
<dbReference type="GO" id="GO:0035994">
    <property type="term" value="P:response to muscle stretch"/>
    <property type="evidence" value="ECO:0007669"/>
    <property type="project" value="Ensembl"/>
</dbReference>
<dbReference type="GO" id="GO:0014044">
    <property type="term" value="P:Schwann cell development"/>
    <property type="evidence" value="ECO:0007669"/>
    <property type="project" value="Ensembl"/>
</dbReference>
<dbReference type="GO" id="GO:0035019">
    <property type="term" value="P:somatic stem cell population maintenance"/>
    <property type="evidence" value="ECO:0007669"/>
    <property type="project" value="Ensembl"/>
</dbReference>
<dbReference type="GO" id="GO:0048538">
    <property type="term" value="P:thymus development"/>
    <property type="evidence" value="ECO:0007669"/>
    <property type="project" value="Ensembl"/>
</dbReference>
<dbReference type="GO" id="GO:0030878">
    <property type="term" value="P:thyroid gland development"/>
    <property type="evidence" value="ECO:0007669"/>
    <property type="project" value="Ensembl"/>
</dbReference>
<dbReference type="GO" id="GO:0044342">
    <property type="term" value="P:type B pancreatic cell proliferation"/>
    <property type="evidence" value="ECO:0007669"/>
    <property type="project" value="Ensembl"/>
</dbReference>
<dbReference type="CDD" id="cd20870">
    <property type="entry name" value="C1_A_C-Raf"/>
    <property type="match status" value="1"/>
</dbReference>
<dbReference type="CDD" id="cd17135">
    <property type="entry name" value="RBD_CRAF"/>
    <property type="match status" value="1"/>
</dbReference>
<dbReference type="CDD" id="cd14149">
    <property type="entry name" value="STKc_C-Raf"/>
    <property type="match status" value="1"/>
</dbReference>
<dbReference type="FunFam" id="3.10.20.90:FF:000015">
    <property type="entry name" value="B-Raf proto-oncogene serine/threonine-protein kinase"/>
    <property type="match status" value="1"/>
</dbReference>
<dbReference type="FunFam" id="3.30.200.20:FF:000024">
    <property type="entry name" value="B-Raf proto-oncogene serine/threonine-protein kinase"/>
    <property type="match status" value="1"/>
</dbReference>
<dbReference type="FunFam" id="3.30.60.20:FF:000004">
    <property type="entry name" value="B-Raf proto-oncogene serine/threonine-protein kinase"/>
    <property type="match status" value="1"/>
</dbReference>
<dbReference type="FunFam" id="1.10.510.10:FF:000036">
    <property type="entry name" value="RAF proto-oncogene serine/threonine-protein kinase"/>
    <property type="match status" value="1"/>
</dbReference>
<dbReference type="Gene3D" id="3.30.60.20">
    <property type="match status" value="1"/>
</dbReference>
<dbReference type="Gene3D" id="3.10.20.90">
    <property type="entry name" value="Phosphatidylinositol 3-kinase Catalytic Subunit, Chain A, domain 1"/>
    <property type="match status" value="1"/>
</dbReference>
<dbReference type="Gene3D" id="3.30.200.20">
    <property type="entry name" value="Phosphorylase Kinase, domain 1"/>
    <property type="match status" value="1"/>
</dbReference>
<dbReference type="Gene3D" id="1.10.510.10">
    <property type="entry name" value="Transferase(Phosphotransferase) domain 1"/>
    <property type="match status" value="1"/>
</dbReference>
<dbReference type="InterPro" id="IPR046349">
    <property type="entry name" value="C1-like_sf"/>
</dbReference>
<dbReference type="InterPro" id="IPR020454">
    <property type="entry name" value="DAG/PE-bd"/>
</dbReference>
<dbReference type="InterPro" id="IPR011009">
    <property type="entry name" value="Kinase-like_dom_sf"/>
</dbReference>
<dbReference type="InterPro" id="IPR002219">
    <property type="entry name" value="PE/DAG-bd"/>
</dbReference>
<dbReference type="InterPro" id="IPR000719">
    <property type="entry name" value="Prot_kinase_dom"/>
</dbReference>
<dbReference type="InterPro" id="IPR017441">
    <property type="entry name" value="Protein_kinase_ATP_BS"/>
</dbReference>
<dbReference type="InterPro" id="IPR003116">
    <property type="entry name" value="RBD_dom"/>
</dbReference>
<dbReference type="InterPro" id="IPR008271">
    <property type="entry name" value="Ser/Thr_kinase_AS"/>
</dbReference>
<dbReference type="InterPro" id="IPR051681">
    <property type="entry name" value="Ser/Thr_Kinases-Pseudokinases"/>
</dbReference>
<dbReference type="InterPro" id="IPR029071">
    <property type="entry name" value="Ubiquitin-like_domsf"/>
</dbReference>
<dbReference type="PANTHER" id="PTHR44329:SF22">
    <property type="entry name" value="RAF PROTO-ONCOGENE SERINE_THREONINE-PROTEIN KINASE"/>
    <property type="match status" value="1"/>
</dbReference>
<dbReference type="PANTHER" id="PTHR44329">
    <property type="entry name" value="SERINE/THREONINE-PROTEIN KINASE TNNI3K-RELATED"/>
    <property type="match status" value="1"/>
</dbReference>
<dbReference type="Pfam" id="PF00130">
    <property type="entry name" value="C1_1"/>
    <property type="match status" value="1"/>
</dbReference>
<dbReference type="Pfam" id="PF00069">
    <property type="entry name" value="Pkinase"/>
    <property type="match status" value="1"/>
</dbReference>
<dbReference type="Pfam" id="PF02196">
    <property type="entry name" value="RBD"/>
    <property type="match status" value="1"/>
</dbReference>
<dbReference type="PRINTS" id="PR00008">
    <property type="entry name" value="DAGPEDOMAIN"/>
</dbReference>
<dbReference type="SMART" id="SM00109">
    <property type="entry name" value="C1"/>
    <property type="match status" value="1"/>
</dbReference>
<dbReference type="SMART" id="SM00455">
    <property type="entry name" value="RBD"/>
    <property type="match status" value="1"/>
</dbReference>
<dbReference type="SMART" id="SM00220">
    <property type="entry name" value="S_TKc"/>
    <property type="match status" value="1"/>
</dbReference>
<dbReference type="SUPFAM" id="SSF57889">
    <property type="entry name" value="Cysteine-rich domain"/>
    <property type="match status" value="1"/>
</dbReference>
<dbReference type="SUPFAM" id="SSF56112">
    <property type="entry name" value="Protein kinase-like (PK-like)"/>
    <property type="match status" value="1"/>
</dbReference>
<dbReference type="SUPFAM" id="SSF54236">
    <property type="entry name" value="Ubiquitin-like"/>
    <property type="match status" value="1"/>
</dbReference>
<dbReference type="PROSITE" id="PS00107">
    <property type="entry name" value="PROTEIN_KINASE_ATP"/>
    <property type="match status" value="1"/>
</dbReference>
<dbReference type="PROSITE" id="PS50011">
    <property type="entry name" value="PROTEIN_KINASE_DOM"/>
    <property type="match status" value="1"/>
</dbReference>
<dbReference type="PROSITE" id="PS00108">
    <property type="entry name" value="PROTEIN_KINASE_ST"/>
    <property type="match status" value="1"/>
</dbReference>
<dbReference type="PROSITE" id="PS50898">
    <property type="entry name" value="RBD"/>
    <property type="match status" value="1"/>
</dbReference>
<dbReference type="PROSITE" id="PS00479">
    <property type="entry name" value="ZF_DAG_PE_1"/>
    <property type="match status" value="1"/>
</dbReference>
<dbReference type="PROSITE" id="PS50081">
    <property type="entry name" value="ZF_DAG_PE_2"/>
    <property type="match status" value="1"/>
</dbReference>
<feature type="chain" id="PRO_0000086599" description="RAF proto-oncogene serine/threonine-protein kinase">
    <location>
        <begin position="1"/>
        <end position="647"/>
    </location>
</feature>
<feature type="domain" description="RBD" evidence="5">
    <location>
        <begin position="56"/>
        <end position="131"/>
    </location>
</feature>
<feature type="domain" description="Protein kinase" evidence="3">
    <location>
        <begin position="349"/>
        <end position="609"/>
    </location>
</feature>
<feature type="zinc finger region" description="Phorbol-ester/DAG-type" evidence="4">
    <location>
        <begin position="138"/>
        <end position="184"/>
    </location>
</feature>
<feature type="region of interest" description="Disordered" evidence="7">
    <location>
        <begin position="236"/>
        <end position="269"/>
    </location>
</feature>
<feature type="region of interest" description="Disordered" evidence="7">
    <location>
        <begin position="284"/>
        <end position="334"/>
    </location>
</feature>
<feature type="compositionally biased region" description="Polar residues" evidence="7">
    <location>
        <begin position="239"/>
        <end position="269"/>
    </location>
</feature>
<feature type="compositionally biased region" description="Low complexity" evidence="7">
    <location>
        <begin position="286"/>
        <end position="297"/>
    </location>
</feature>
<feature type="compositionally biased region" description="Polar residues" evidence="7">
    <location>
        <begin position="298"/>
        <end position="309"/>
    </location>
</feature>
<feature type="active site" description="Proton acceptor" evidence="3 6">
    <location>
        <position position="468"/>
    </location>
</feature>
<feature type="binding site" evidence="3">
    <location>
        <begin position="355"/>
        <end position="363"/>
    </location>
    <ligand>
        <name>ATP</name>
        <dbReference type="ChEBI" id="CHEBI:30616"/>
    </ligand>
</feature>
<feature type="binding site" evidence="3">
    <location>
        <position position="375"/>
    </location>
    <ligand>
        <name>ATP</name>
        <dbReference type="ChEBI" id="CHEBI:30616"/>
    </ligand>
</feature>
<feature type="modified residue" description="Phosphoserine" evidence="1">
    <location>
        <position position="43"/>
    </location>
</feature>
<feature type="modified residue" description="Phosphoserine" evidence="1">
    <location>
        <position position="259"/>
    </location>
</feature>
<feature type="modified residue" description="Phosphothreonine; by autocatalysis" evidence="1">
    <location>
        <position position="268"/>
    </location>
</feature>
<feature type="modified residue" description="Phosphoserine" evidence="1">
    <location>
        <position position="338"/>
    </location>
</feature>
<feature type="modified residue" description="Phosphoserine" evidence="1">
    <location>
        <position position="499"/>
    </location>
</feature>
<feature type="modified residue" description="Phosphoserine" evidence="1">
    <location>
        <position position="621"/>
    </location>
</feature>
<feature type="splice variant" id="VSP_034628" description="In isoform 2." evidence="9">
    <original>E</original>
    <variation>ENNSLNASPSSWCRRFCLRGR</variation>
    <location>
        <position position="278"/>
    </location>
</feature>
<feature type="sequence conflict" description="In Ref. 2; AAA48952." evidence="10" ref="2">
    <original>S</original>
    <variation>F</variation>
    <location>
        <position position="549"/>
    </location>
</feature>
<reference key="1">
    <citation type="journal article" date="1988" name="Oncogene">
        <title>Primary structure of the chicken c-mil protein: identification of domains shared with or absent from the retroviral v-mil protein.</title>
        <authorList>
            <person name="Koenen M."/>
            <person name="Sippel A.E."/>
            <person name="Trachmann C."/>
            <person name="Bister K."/>
        </authorList>
    </citation>
    <scope>NUCLEOTIDE SEQUENCE [MRNA] (ISOFORM 1)</scope>
    <source>
        <tissue>Erythroblast</tissue>
    </source>
</reference>
<reference key="2">
    <citation type="journal article" date="1985" name="Virology">
        <title>Nucleotide sequence analysis of the chicken gene c-mil, the progenitor of the retroviral oncogene v-mil.</title>
        <authorList>
            <person name="Jansen H.W."/>
            <person name="Bister K."/>
        </authorList>
    </citation>
    <scope>NUCLEOTIDE SEQUENCE [GENOMIC DNA] OF 228-647</scope>
</reference>
<reference key="3">
    <citation type="journal article" date="1985" name="Virology">
        <title>Analysis of the cellular proto-oncogene mht/raf: relationship to the 5' sequences of v-mht in avian carcinoma virus MH2 and v-raf in murine sarcoma virus 3611.</title>
        <authorList>
            <person name="Flordellis C.S."/>
            <person name="Kan N.C."/>
            <person name="Lautenberger J.A."/>
            <person name="Samuel K.P."/>
            <person name="Garon C.F."/>
            <person name="Papas T.S."/>
        </authorList>
    </citation>
    <scope>NUCLEOTIDE SEQUENCE [GENOMIC DNA] OF 230-330</scope>
</reference>
<reference key="4">
    <citation type="journal article" date="1988" name="Mol. Cell. Biol.">
        <title>Alternative splicing of RNAs transcribed from the chicken c-mil gene.</title>
        <authorList>
            <person name="Dozier C."/>
            <person name="Denhez F."/>
            <person name="Henry C."/>
            <person name="Coll J."/>
            <person name="Begue A."/>
            <person name="Quatannens B."/>
            <person name="Saule S."/>
            <person name="Stehelin D."/>
        </authorList>
    </citation>
    <scope>NUCLEOTIDE SEQUENCE [MRNA] OF 275-283 (ISOFORM 2)</scope>
    <scope>ALTERNATIVE SPLICING</scope>
    <source>
        <tissue>Embryo</tissue>
    </source>
</reference>
<reference key="5">
    <citation type="journal article" date="1991" name="Oncogene">
        <title>An alternatively spliced c-mil/raf mRNA is predominantly expressed in chicken muscular tissues and conserved among vertebrate species.</title>
        <authorList>
            <person name="Dozier C."/>
            <person name="Ansieau S."/>
            <person name="Ferreira E."/>
            <person name="Coll J."/>
            <person name="Stehelin D."/>
        </authorList>
    </citation>
    <scope>PARTIAL NUCLEOTIDE SEQUENCE [GENOMIC DNA]</scope>
    <scope>ALTERNATIVE SPLICING</scope>
    <scope>TISSUE SPECIFICITY</scope>
</reference>